<evidence type="ECO:0000250" key="1"/>
<evidence type="ECO:0000255" key="2"/>
<evidence type="ECO:0000269" key="3">
    <source>
    </source>
</evidence>
<evidence type="ECO:0000269" key="4">
    <source>
    </source>
</evidence>
<evidence type="ECO:0000305" key="5"/>
<protein>
    <recommendedName>
        <fullName>Extracellular endo-inulinase inuA</fullName>
        <ecNumber>3.2.1.7</ecNumber>
    </recommendedName>
</protein>
<organism>
    <name type="scientific">Aspergillus niger</name>
    <dbReference type="NCBI Taxonomy" id="5061"/>
    <lineage>
        <taxon>Eukaryota</taxon>
        <taxon>Fungi</taxon>
        <taxon>Dikarya</taxon>
        <taxon>Ascomycota</taxon>
        <taxon>Pezizomycotina</taxon>
        <taxon>Eurotiomycetes</taxon>
        <taxon>Eurotiomycetidae</taxon>
        <taxon>Eurotiales</taxon>
        <taxon>Aspergillaceae</taxon>
        <taxon>Aspergillus</taxon>
        <taxon>Aspergillus subgen. Circumdati</taxon>
    </lineage>
</organism>
<comment type="function">
    <text evidence="3">Endo-inulinase involved in utilization of the plant storage polymer inulin, consisting of fructooligosaccharides with a degree of polymerization (DP) value from 2 to 60.</text>
</comment>
<comment type="catalytic activity">
    <reaction evidence="3">
        <text>Endohydrolysis of (2-&gt;1)-beta-D-fructosidic linkages in inulin.</text>
        <dbReference type="EC" id="3.2.1.7"/>
    </reaction>
</comment>
<comment type="activity regulation">
    <text evidence="3">Activity is stimulated by Mn(2+), Fe(2+) Ca(2+) metal ions and DTT; and inhibited by glucose, Mg(2+), Zn(2+), Cu(2+), Hg(2+), Al(3+), and Fe(3+).</text>
</comment>
<comment type="biophysicochemical properties">
    <kinetics>
        <KM evidence="3">2.57 mM for inulin</KM>
    </kinetics>
    <phDependence>
        <text evidence="3">Optimum pH is 4.5.</text>
    </phDependence>
    <temperatureDependence>
        <text evidence="3">Optimum temperature is 55 degrees Celsius.</text>
    </temperatureDependence>
</comment>
<comment type="subcellular location">
    <subcellularLocation>
        <location evidence="1">Secreted</location>
    </subcellularLocation>
</comment>
<comment type="biotechnology">
    <text evidence="4">Plays an important role in biofuel production. Pure nonhydrolyzed inulin can be directly converted to ethanol in a simultaneous saccharification and fermentation process when combining A.niger and S.cerevisiae. Endoinulinase can digest fructooligosaccharides with high degree of polymerization (DP) values (&gt;20) into short molecules that may be readily hydrolyzed by S.cerevisiae SUC2. Thus, introduction of an endoinulinase gene into S.cerevisiae will improve its inulin utilization and ethanol fermentation through collaboration between the heterologous endoinulinase and the invertase SUC2.</text>
</comment>
<comment type="similarity">
    <text evidence="5">Belongs to the glycosyl hydrolase 32 family.</text>
</comment>
<gene>
    <name type="primary">inuA</name>
</gene>
<keyword id="KW-0119">Carbohydrate metabolism</keyword>
<keyword id="KW-0325">Glycoprotein</keyword>
<keyword id="KW-0326">Glycosidase</keyword>
<keyword id="KW-0378">Hydrolase</keyword>
<keyword id="KW-0624">Polysaccharide degradation</keyword>
<keyword id="KW-0964">Secreted</keyword>
<keyword id="KW-0732">Signal</keyword>
<reference key="1">
    <citation type="journal article" date="1998" name="Biosci. Biotechnol. Biochem.">
        <title>Molecular cloning and sequence analysis of two endoinulinase genes from Aspergillus niger.</title>
        <authorList>
            <person name="Ohta K."/>
            <person name="Akimoto H."/>
            <person name="Matsuda S."/>
            <person name="Toshimitsu D."/>
            <person name="Nakamura T."/>
        </authorList>
    </citation>
    <scope>NUCLEOTIDE SEQUENCE [GENOMIC DNA]</scope>
    <source>
        <strain>12</strain>
    </source>
</reference>
<reference key="2">
    <citation type="journal article" date="1999" name="J. Biosci. Bioeng.">
        <title>Transcriptional analysis of two endoinulinase genes inuA and inuB in Aspergillus niger and nucleotide sequences of their promoter regions.</title>
        <authorList>
            <person name="Akimoto H."/>
            <person name="Kushima T."/>
            <person name="Nakamura T."/>
            <person name="Ohta K."/>
        </authorList>
    </citation>
    <scope>NUCLEOTIDE SEQUENCE [GENOMIC DNA]</scope>
    <source>
        <strain>12</strain>
    </source>
</reference>
<reference key="3">
    <citation type="journal article" date="2004" name="Protein Expr. Purif.">
        <title>Purification and characterization of inulinase from Aspergillus niger AF10 expressed in Pichia pastoris.</title>
        <authorList>
            <person name="Zhang L."/>
            <person name="Zhao C."/>
            <person name="Zhu D."/>
            <person name="Ohta Y."/>
            <person name="Wang Y."/>
        </authorList>
    </citation>
    <scope>NUCLEOTIDE SEQUENCE [GENOMIC DNA]</scope>
    <scope>VARIANTS THR-18; ALA-110; VAL-130; ASN-292; GLU-371; LYS-419; THR-437 AND ASP-455</scope>
    <scope>FUNCTION</scope>
    <scope>SUBCELLULAR LOCATION</scope>
    <scope>CATALYTIC ACTIVITY</scope>
    <scope>BIOPHYSICOCHEMICAL PROPERTIES</scope>
    <scope>ACTIVITY REGULATION</scope>
    <source>
        <strain>AF10</strain>
    </source>
</reference>
<reference key="4">
    <citation type="journal article" date="1993" name="Appl. Environ. Microbiol.">
        <title>Production of high concentrations of ethanol from inulin by simultaneous saccharification and fermentation using Aspergillus niger and Saccharomyces cerevisiae.</title>
        <authorList>
            <person name="Ohta K."/>
            <person name="Hamada S."/>
            <person name="Nakamura T."/>
        </authorList>
    </citation>
    <scope>BIOTECHNOLOGY</scope>
</reference>
<dbReference type="EC" id="3.2.1.7"/>
<dbReference type="EMBL" id="AB012771">
    <property type="protein sequence ID" value="BAA33797.1"/>
    <property type="molecule type" value="Genomic_DNA"/>
</dbReference>
<dbReference type="EMBL" id="AF369388">
    <property type="protein sequence ID" value="AAK43726.1"/>
    <property type="molecule type" value="Genomic_DNA"/>
</dbReference>
<dbReference type="PIR" id="JE0301">
    <property type="entry name" value="JE0301"/>
</dbReference>
<dbReference type="SMR" id="O74641"/>
<dbReference type="CAZy" id="GH32">
    <property type="family name" value="Glycoside Hydrolase Family 32"/>
</dbReference>
<dbReference type="GlyCosmos" id="O74641">
    <property type="glycosylation" value="4 sites, No reported glycans"/>
</dbReference>
<dbReference type="PaxDb" id="5061-CADANGAP00008504"/>
<dbReference type="VEuPathDB" id="FungiDB:An11g03200"/>
<dbReference type="VEuPathDB" id="FungiDB:ASPNIDRAFT2_1095959"/>
<dbReference type="VEuPathDB" id="FungiDB:ATCC64974_89460"/>
<dbReference type="VEuPathDB" id="FungiDB:M747DRAFT_330865"/>
<dbReference type="eggNOG" id="KOG0228">
    <property type="taxonomic scope" value="Eukaryota"/>
</dbReference>
<dbReference type="BRENDA" id="3.2.1.7">
    <property type="organism ID" value="518"/>
</dbReference>
<dbReference type="BRENDA" id="3.2.1.80">
    <property type="organism ID" value="518"/>
</dbReference>
<dbReference type="GO" id="GO:0005737">
    <property type="term" value="C:cytoplasm"/>
    <property type="evidence" value="ECO:0007669"/>
    <property type="project" value="TreeGrafter"/>
</dbReference>
<dbReference type="GO" id="GO:0005576">
    <property type="term" value="C:extracellular region"/>
    <property type="evidence" value="ECO:0007669"/>
    <property type="project" value="UniProtKB-SubCell"/>
</dbReference>
<dbReference type="GO" id="GO:0051670">
    <property type="term" value="F:inulinase activity"/>
    <property type="evidence" value="ECO:0007669"/>
    <property type="project" value="UniProtKB-EC"/>
</dbReference>
<dbReference type="GO" id="GO:0004575">
    <property type="term" value="F:sucrose alpha-glucosidase activity"/>
    <property type="evidence" value="ECO:0007669"/>
    <property type="project" value="TreeGrafter"/>
</dbReference>
<dbReference type="GO" id="GO:0000272">
    <property type="term" value="P:polysaccharide catabolic process"/>
    <property type="evidence" value="ECO:0007669"/>
    <property type="project" value="UniProtKB-KW"/>
</dbReference>
<dbReference type="GO" id="GO:0005987">
    <property type="term" value="P:sucrose catabolic process"/>
    <property type="evidence" value="ECO:0007669"/>
    <property type="project" value="TreeGrafter"/>
</dbReference>
<dbReference type="CDD" id="cd18622">
    <property type="entry name" value="GH32_Inu-like"/>
    <property type="match status" value="1"/>
</dbReference>
<dbReference type="FunFam" id="2.115.10.20:FF:000008">
    <property type="entry name" value="Extracellular endo-inulinase"/>
    <property type="match status" value="1"/>
</dbReference>
<dbReference type="FunFam" id="2.60.120.560:FF:000003">
    <property type="entry name" value="Extracellular exo-inulinase inuE"/>
    <property type="match status" value="1"/>
</dbReference>
<dbReference type="Gene3D" id="2.60.120.560">
    <property type="entry name" value="Exo-inulinase, domain 1"/>
    <property type="match status" value="1"/>
</dbReference>
<dbReference type="Gene3D" id="2.115.10.20">
    <property type="entry name" value="Glycosyl hydrolase domain, family 43"/>
    <property type="match status" value="1"/>
</dbReference>
<dbReference type="InterPro" id="IPR013320">
    <property type="entry name" value="ConA-like_dom_sf"/>
</dbReference>
<dbReference type="InterPro" id="IPR001362">
    <property type="entry name" value="Glyco_hydro_32"/>
</dbReference>
<dbReference type="InterPro" id="IPR013189">
    <property type="entry name" value="Glyco_hydro_32_C"/>
</dbReference>
<dbReference type="InterPro" id="IPR013148">
    <property type="entry name" value="Glyco_hydro_32_N"/>
</dbReference>
<dbReference type="InterPro" id="IPR023296">
    <property type="entry name" value="Glyco_hydro_beta-prop_sf"/>
</dbReference>
<dbReference type="PANTHER" id="PTHR42800">
    <property type="entry name" value="EXOINULINASE INUD (AFU_ORTHOLOGUE AFUA_5G00480)"/>
    <property type="match status" value="1"/>
</dbReference>
<dbReference type="PANTHER" id="PTHR42800:SF1">
    <property type="entry name" value="EXOINULINASE INUD (AFU_ORTHOLOGUE AFUA_5G00480)"/>
    <property type="match status" value="1"/>
</dbReference>
<dbReference type="Pfam" id="PF08244">
    <property type="entry name" value="Glyco_hydro_32C"/>
    <property type="match status" value="1"/>
</dbReference>
<dbReference type="Pfam" id="PF00251">
    <property type="entry name" value="Glyco_hydro_32N"/>
    <property type="match status" value="1"/>
</dbReference>
<dbReference type="SMART" id="SM00640">
    <property type="entry name" value="Glyco_32"/>
    <property type="match status" value="1"/>
</dbReference>
<dbReference type="SUPFAM" id="SSF75005">
    <property type="entry name" value="Arabinanase/levansucrase/invertase"/>
    <property type="match status" value="1"/>
</dbReference>
<dbReference type="SUPFAM" id="SSF49899">
    <property type="entry name" value="Concanavalin A-like lectins/glucanases"/>
    <property type="match status" value="1"/>
</dbReference>
<proteinExistence type="evidence at protein level"/>
<name>INUA_ASPNG</name>
<sequence length="516" mass="55797">MLNPKVAYMVWMTCLGLMLPSQAQSNDYRPSYHFTPDQYWMNEPNGLIKIGSTWHLFFQHNPTANVWGNICWGHATSTDLMHWAHKPTAIADENGVEAFTGTAYYDPNNTSGLGDSANPPYLAWFTGYTTSSQTQDQRLAFSVDNGATWTKFQGNPIISTSQEAPHDITGGLESRDPKVFFHRQSGNWIMVLAHGGQDKLSFWTSADTINWTWQSDLKSTSINGLSSDITGWEVPDMFELPVEGTEETTWVVMMTPAEGSPAGGNGVLAITGSFDGKSFTADPVDASTMWLDNGRDFDGALSWVNVPASDGRRIIAAVMNSYGSNPPTTTWKGMLSFPRTLSLKKVGTQQHFVQQPITELDTISTSLQTLANQTITPGQTLLSSIRGTALDVRVAFYPDAGSVLSLAVRKGASEQTVINYTQSDATLSVDRTESGDISYDPAAGGVHTAKLEEDGTGLVSIRVLVDTCSVEVFGGQGEAVISDLIFPSDSSDGLALEVTGGNAVLQSVDVRSVSLE</sequence>
<accession>O74641</accession>
<accession>Q96WZ8</accession>
<feature type="signal peptide" evidence="2">
    <location>
        <begin position="1"/>
        <end position="25"/>
    </location>
</feature>
<feature type="chain" id="PRO_5000049217" description="Extracellular endo-inulinase inuA">
    <location>
        <begin position="26"/>
        <end position="516"/>
    </location>
</feature>
<feature type="active site" evidence="1">
    <location>
        <position position="43"/>
    </location>
</feature>
<feature type="binding site" evidence="1">
    <location>
        <begin position="40"/>
        <end position="43"/>
    </location>
    <ligand>
        <name>substrate</name>
    </ligand>
</feature>
<feature type="binding site" evidence="1">
    <location>
        <position position="59"/>
    </location>
    <ligand>
        <name>substrate</name>
    </ligand>
</feature>
<feature type="binding site" evidence="1">
    <location>
        <position position="67"/>
    </location>
    <ligand>
        <name>substrate</name>
    </ligand>
</feature>
<feature type="binding site" evidence="1">
    <location>
        <begin position="99"/>
        <end position="100"/>
    </location>
    <ligand>
        <name>substrate</name>
    </ligand>
</feature>
<feature type="binding site" evidence="1">
    <location>
        <begin position="175"/>
        <end position="176"/>
    </location>
    <ligand>
        <name>substrate</name>
    </ligand>
</feature>
<feature type="binding site" evidence="1">
    <location>
        <position position="233"/>
    </location>
    <ligand>
        <name>substrate</name>
    </ligand>
</feature>
<feature type="glycosylation site" description="N-linked (GlcNAc...) asparagine" evidence="2">
    <location>
        <position position="109"/>
    </location>
</feature>
<feature type="glycosylation site" description="N-linked (GlcNAc...) asparagine" evidence="2">
    <location>
        <position position="210"/>
    </location>
</feature>
<feature type="glycosylation site" description="N-linked (GlcNAc...) asparagine" evidence="2">
    <location>
        <position position="372"/>
    </location>
</feature>
<feature type="glycosylation site" description="N-linked (GlcNAc...) asparagine" evidence="2">
    <location>
        <position position="419"/>
    </location>
</feature>
<feature type="sequence variant" description="In strain: AF10." evidence="3">
    <original>M</original>
    <variation>T</variation>
    <location>
        <position position="18"/>
    </location>
</feature>
<feature type="sequence variant" description="In strain: AF10." evidence="3">
    <original>T</original>
    <variation>A</variation>
    <location>
        <position position="110"/>
    </location>
</feature>
<feature type="sequence variant" description="In strain: AF10." evidence="3">
    <original>T</original>
    <variation>V</variation>
    <location>
        <position position="130"/>
    </location>
</feature>
<feature type="sequence variant" description="In strain: AF10." evidence="3">
    <original>D</original>
    <variation>N</variation>
    <location>
        <position position="292"/>
    </location>
</feature>
<feature type="sequence variant" description="In strain: AF10." evidence="3">
    <original>A</original>
    <variation>E</variation>
    <location>
        <position position="371"/>
    </location>
</feature>
<feature type="sequence variant" description="In strain: AF10." evidence="3">
    <original>N</original>
    <variation>K</variation>
    <location>
        <position position="419"/>
    </location>
</feature>
<feature type="sequence variant" description="In strain: AF10." evidence="3">
    <original>I</original>
    <variation>T</variation>
    <location>
        <position position="437"/>
    </location>
</feature>
<feature type="sequence variant" description="In strain: AF10." evidence="3">
    <original>G</original>
    <variation>D</variation>
    <location>
        <position position="455"/>
    </location>
</feature>